<gene>
    <name evidence="1" type="primary">rpsJ</name>
    <name type="ordered locus">EUBREC_0417</name>
</gene>
<sequence>MASQVMRITLKAYDHELVDSSAKKIIETVKKNGSQVSGPVPLPTKKEVVTILRATHKYKDSREQFEQRTHKRLIDIINPTQKTTESLSRIEMPAGVYIDIKMKQK</sequence>
<dbReference type="EMBL" id="CP001107">
    <property type="protein sequence ID" value="ACR74208.1"/>
    <property type="molecule type" value="Genomic_DNA"/>
</dbReference>
<dbReference type="RefSeq" id="WP_012741326.1">
    <property type="nucleotide sequence ID" value="NZ_CAXSYD010000003.1"/>
</dbReference>
<dbReference type="SMR" id="C4ZBD3"/>
<dbReference type="STRING" id="515619.EUBREC_0417"/>
<dbReference type="PaxDb" id="515619-EUBREC_0417"/>
<dbReference type="GeneID" id="86987327"/>
<dbReference type="KEGG" id="ere:EUBREC_0417"/>
<dbReference type="HOGENOM" id="CLU_122625_1_2_9"/>
<dbReference type="Proteomes" id="UP000001477">
    <property type="component" value="Chromosome"/>
</dbReference>
<dbReference type="GO" id="GO:1990904">
    <property type="term" value="C:ribonucleoprotein complex"/>
    <property type="evidence" value="ECO:0007669"/>
    <property type="project" value="UniProtKB-KW"/>
</dbReference>
<dbReference type="GO" id="GO:0005840">
    <property type="term" value="C:ribosome"/>
    <property type="evidence" value="ECO:0007669"/>
    <property type="project" value="UniProtKB-KW"/>
</dbReference>
<dbReference type="GO" id="GO:0003735">
    <property type="term" value="F:structural constituent of ribosome"/>
    <property type="evidence" value="ECO:0007669"/>
    <property type="project" value="InterPro"/>
</dbReference>
<dbReference type="GO" id="GO:0000049">
    <property type="term" value="F:tRNA binding"/>
    <property type="evidence" value="ECO:0007669"/>
    <property type="project" value="UniProtKB-UniRule"/>
</dbReference>
<dbReference type="GO" id="GO:0006412">
    <property type="term" value="P:translation"/>
    <property type="evidence" value="ECO:0007669"/>
    <property type="project" value="UniProtKB-UniRule"/>
</dbReference>
<dbReference type="FunFam" id="3.30.70.600:FF:000003">
    <property type="entry name" value="30S ribosomal protein S10"/>
    <property type="match status" value="1"/>
</dbReference>
<dbReference type="Gene3D" id="3.30.70.600">
    <property type="entry name" value="Ribosomal protein S10 domain"/>
    <property type="match status" value="1"/>
</dbReference>
<dbReference type="HAMAP" id="MF_00508">
    <property type="entry name" value="Ribosomal_uS10"/>
    <property type="match status" value="1"/>
</dbReference>
<dbReference type="InterPro" id="IPR001848">
    <property type="entry name" value="Ribosomal_uS10"/>
</dbReference>
<dbReference type="InterPro" id="IPR018268">
    <property type="entry name" value="Ribosomal_uS10_CS"/>
</dbReference>
<dbReference type="InterPro" id="IPR027486">
    <property type="entry name" value="Ribosomal_uS10_dom"/>
</dbReference>
<dbReference type="InterPro" id="IPR036838">
    <property type="entry name" value="Ribosomal_uS10_dom_sf"/>
</dbReference>
<dbReference type="NCBIfam" id="NF001861">
    <property type="entry name" value="PRK00596.1"/>
    <property type="match status" value="1"/>
</dbReference>
<dbReference type="NCBIfam" id="TIGR01049">
    <property type="entry name" value="rpsJ_bact"/>
    <property type="match status" value="1"/>
</dbReference>
<dbReference type="PANTHER" id="PTHR11700">
    <property type="entry name" value="30S RIBOSOMAL PROTEIN S10 FAMILY MEMBER"/>
    <property type="match status" value="1"/>
</dbReference>
<dbReference type="Pfam" id="PF00338">
    <property type="entry name" value="Ribosomal_S10"/>
    <property type="match status" value="1"/>
</dbReference>
<dbReference type="PRINTS" id="PR00971">
    <property type="entry name" value="RIBOSOMALS10"/>
</dbReference>
<dbReference type="SMART" id="SM01403">
    <property type="entry name" value="Ribosomal_S10"/>
    <property type="match status" value="1"/>
</dbReference>
<dbReference type="SUPFAM" id="SSF54999">
    <property type="entry name" value="Ribosomal protein S10"/>
    <property type="match status" value="1"/>
</dbReference>
<dbReference type="PROSITE" id="PS00361">
    <property type="entry name" value="RIBOSOMAL_S10"/>
    <property type="match status" value="1"/>
</dbReference>
<organism>
    <name type="scientific">Agathobacter rectalis (strain ATCC 33656 / DSM 3377 / JCM 17463 / KCTC 5835 / VPI 0990)</name>
    <name type="common">Eubacterium rectale</name>
    <dbReference type="NCBI Taxonomy" id="515619"/>
    <lineage>
        <taxon>Bacteria</taxon>
        <taxon>Bacillati</taxon>
        <taxon>Bacillota</taxon>
        <taxon>Clostridia</taxon>
        <taxon>Lachnospirales</taxon>
        <taxon>Lachnospiraceae</taxon>
        <taxon>Agathobacter</taxon>
    </lineage>
</organism>
<evidence type="ECO:0000255" key="1">
    <source>
        <dbReference type="HAMAP-Rule" id="MF_00508"/>
    </source>
</evidence>
<evidence type="ECO:0000305" key="2"/>
<accession>C4ZBD3</accession>
<feature type="chain" id="PRO_1000206585" description="Small ribosomal subunit protein uS10">
    <location>
        <begin position="1"/>
        <end position="105"/>
    </location>
</feature>
<proteinExistence type="inferred from homology"/>
<protein>
    <recommendedName>
        <fullName evidence="1">Small ribosomal subunit protein uS10</fullName>
    </recommendedName>
    <alternativeName>
        <fullName evidence="2">30S ribosomal protein S10</fullName>
    </alternativeName>
</protein>
<keyword id="KW-0687">Ribonucleoprotein</keyword>
<keyword id="KW-0689">Ribosomal protein</keyword>
<comment type="function">
    <text evidence="1">Involved in the binding of tRNA to the ribosomes.</text>
</comment>
<comment type="subunit">
    <text evidence="1">Part of the 30S ribosomal subunit.</text>
</comment>
<comment type="similarity">
    <text evidence="1">Belongs to the universal ribosomal protein uS10 family.</text>
</comment>
<reference key="1">
    <citation type="journal article" date="2009" name="Proc. Natl. Acad. Sci. U.S.A.">
        <title>Characterizing a model human gut microbiota composed of members of its two dominant bacterial phyla.</title>
        <authorList>
            <person name="Mahowald M.A."/>
            <person name="Rey F.E."/>
            <person name="Seedorf H."/>
            <person name="Turnbaugh P.J."/>
            <person name="Fulton R.S."/>
            <person name="Wollam A."/>
            <person name="Shah N."/>
            <person name="Wang C."/>
            <person name="Magrini V."/>
            <person name="Wilson R.K."/>
            <person name="Cantarel B.L."/>
            <person name="Coutinho P.M."/>
            <person name="Henrissat B."/>
            <person name="Crock L.W."/>
            <person name="Russell A."/>
            <person name="Verberkmoes N.C."/>
            <person name="Hettich R.L."/>
            <person name="Gordon J.I."/>
        </authorList>
    </citation>
    <scope>NUCLEOTIDE SEQUENCE [LARGE SCALE GENOMIC DNA]</scope>
    <source>
        <strain>ATCC 33656 / DSM 3377 / JCM 17463 / KCTC 5835 / LMG 30912 / VPI 0990</strain>
    </source>
</reference>
<name>RS10_AGARV</name>